<feature type="transit peptide" description="Mitochondrion" evidence="2">
    <location>
        <begin position="1"/>
        <end position="41"/>
    </location>
</feature>
<feature type="chain" id="PRO_0000416853" description="Probable gamma-aminobutyrate transaminase 3, mitochondrial">
    <location>
        <begin position="42"/>
        <end position="510"/>
    </location>
</feature>
<feature type="binding site" evidence="1">
    <location>
        <begin position="166"/>
        <end position="167"/>
    </location>
    <ligand>
        <name>pyridoxal 5'-phosphate</name>
        <dbReference type="ChEBI" id="CHEBI:597326"/>
    </ligand>
</feature>
<feature type="binding site" evidence="1">
    <location>
        <position position="199"/>
    </location>
    <ligand>
        <name>substrate</name>
    </ligand>
</feature>
<feature type="binding site" evidence="1">
    <location>
        <position position="306"/>
    </location>
    <ligand>
        <name>pyridoxal 5'-phosphate</name>
        <dbReference type="ChEBI" id="CHEBI:597326"/>
    </ligand>
</feature>
<feature type="binding site" evidence="1">
    <location>
        <position position="335"/>
    </location>
    <ligand>
        <name>substrate</name>
    </ligand>
</feature>
<feature type="modified residue" description="N6-(pyridoxal phosphate)lysine" evidence="1">
    <location>
        <position position="335"/>
    </location>
</feature>
<name>GATP3_ORYSI</name>
<evidence type="ECO:0000250" key="1"/>
<evidence type="ECO:0000255" key="2"/>
<evidence type="ECO:0000305" key="3"/>
<organism>
    <name type="scientific">Oryza sativa subsp. indica</name>
    <name type="common">Rice</name>
    <dbReference type="NCBI Taxonomy" id="39946"/>
    <lineage>
        <taxon>Eukaryota</taxon>
        <taxon>Viridiplantae</taxon>
        <taxon>Streptophyta</taxon>
        <taxon>Embryophyta</taxon>
        <taxon>Tracheophyta</taxon>
        <taxon>Spermatophyta</taxon>
        <taxon>Magnoliopsida</taxon>
        <taxon>Liliopsida</taxon>
        <taxon>Poales</taxon>
        <taxon>Poaceae</taxon>
        <taxon>BOP clade</taxon>
        <taxon>Oryzoideae</taxon>
        <taxon>Oryzeae</taxon>
        <taxon>Oryzinae</taxon>
        <taxon>Oryza</taxon>
        <taxon>Oryza sativa</taxon>
    </lineage>
</organism>
<proteinExistence type="inferred from homology"/>
<comment type="function">
    <text evidence="1">Transaminase that degrades gamma-amino butyric acid (GABA).</text>
</comment>
<comment type="catalytic activity">
    <reaction>
        <text>4-aminobutanoate + pyruvate = succinate semialdehyde + L-alanine</text>
        <dbReference type="Rhea" id="RHEA:32263"/>
        <dbReference type="ChEBI" id="CHEBI:15361"/>
        <dbReference type="ChEBI" id="CHEBI:57706"/>
        <dbReference type="ChEBI" id="CHEBI:57972"/>
        <dbReference type="ChEBI" id="CHEBI:59888"/>
        <dbReference type="EC" id="2.6.1.96"/>
    </reaction>
</comment>
<comment type="catalytic activity">
    <reaction>
        <text>4-aminobutanoate + glyoxylate = succinate semialdehyde + glycine</text>
        <dbReference type="Rhea" id="RHEA:32267"/>
        <dbReference type="ChEBI" id="CHEBI:36655"/>
        <dbReference type="ChEBI" id="CHEBI:57305"/>
        <dbReference type="ChEBI" id="CHEBI:57706"/>
        <dbReference type="ChEBI" id="CHEBI:59888"/>
        <dbReference type="EC" id="2.6.1.96"/>
    </reaction>
</comment>
<comment type="subcellular location">
    <subcellularLocation>
        <location evidence="3">Mitochondrion</location>
    </subcellularLocation>
</comment>
<comment type="similarity">
    <text evidence="3">Belongs to the class-III pyridoxal-phosphate-dependent aminotransferase family.</text>
</comment>
<protein>
    <recommendedName>
        <fullName>Probable gamma-aminobutyrate transaminase 3, mitochondrial</fullName>
        <ecNumber>2.6.1.96</ecNumber>
    </recommendedName>
</protein>
<dbReference type="EC" id="2.6.1.96"/>
<dbReference type="EMBL" id="CM000133">
    <property type="protein sequence ID" value="EEC83087.1"/>
    <property type="molecule type" value="Genomic_DNA"/>
</dbReference>
<dbReference type="SMR" id="B8BBZ7"/>
<dbReference type="STRING" id="39946.B8BBZ7"/>
<dbReference type="EnsemblPlants" id="BGIOSGA027464-TA">
    <property type="protein sequence ID" value="BGIOSGA027464-PA"/>
    <property type="gene ID" value="BGIOSGA027464"/>
</dbReference>
<dbReference type="EnsemblPlants" id="OsGoSa_08g0006490.01">
    <property type="protein sequence ID" value="OsGoSa_08g0006490.01"/>
    <property type="gene ID" value="OsGoSa_08g0006490"/>
</dbReference>
<dbReference type="EnsemblPlants" id="OsIR64_08g0006520.01">
    <property type="protein sequence ID" value="OsIR64_08g0006520.01"/>
    <property type="gene ID" value="OsIR64_08g0006520"/>
</dbReference>
<dbReference type="EnsemblPlants" id="OsKYG_08g0006540.01">
    <property type="protein sequence ID" value="OsKYG_08g0006540.01"/>
    <property type="gene ID" value="OsKYG_08g0006540"/>
</dbReference>
<dbReference type="EnsemblPlants" id="OsLima_08g0006430.01">
    <property type="protein sequence ID" value="OsLima_08g0006430.01"/>
    <property type="gene ID" value="OsLima_08g0006430"/>
</dbReference>
<dbReference type="EnsemblPlants" id="OsMH63_08G006710_01">
    <property type="protein sequence ID" value="OsMH63_08G006710_01"/>
    <property type="gene ID" value="OsMH63_08G006710"/>
</dbReference>
<dbReference type="EnsemblPlants" id="OsPr106_08g0006760.01">
    <property type="protein sequence ID" value="OsPr106_08g0006760.01"/>
    <property type="gene ID" value="OsPr106_08g0006760"/>
</dbReference>
<dbReference type="EnsemblPlants" id="OsZS97_08G006540_01">
    <property type="protein sequence ID" value="OsZS97_08G006540_01"/>
    <property type="gene ID" value="OsZS97_08G006540"/>
</dbReference>
<dbReference type="Gramene" id="BGIOSGA027464-TA">
    <property type="protein sequence ID" value="BGIOSGA027464-PA"/>
    <property type="gene ID" value="BGIOSGA027464"/>
</dbReference>
<dbReference type="Gramene" id="OsGoSa_08g0006490.01">
    <property type="protein sequence ID" value="OsGoSa_08g0006490.01"/>
    <property type="gene ID" value="OsGoSa_08g0006490"/>
</dbReference>
<dbReference type="Gramene" id="OsIR64_08g0006520.01">
    <property type="protein sequence ID" value="OsIR64_08g0006520.01"/>
    <property type="gene ID" value="OsIR64_08g0006520"/>
</dbReference>
<dbReference type="Gramene" id="OsKYG_08g0006540.01">
    <property type="protein sequence ID" value="OsKYG_08g0006540.01"/>
    <property type="gene ID" value="OsKYG_08g0006540"/>
</dbReference>
<dbReference type="Gramene" id="OsLima_08g0006430.01">
    <property type="protein sequence ID" value="OsLima_08g0006430.01"/>
    <property type="gene ID" value="OsLima_08g0006430"/>
</dbReference>
<dbReference type="Gramene" id="OsMH63_08G006710_01">
    <property type="protein sequence ID" value="OsMH63_08G006710_01"/>
    <property type="gene ID" value="OsMH63_08G006710"/>
</dbReference>
<dbReference type="Gramene" id="OsPr106_08g0006760.01">
    <property type="protein sequence ID" value="OsPr106_08g0006760.01"/>
    <property type="gene ID" value="OsPr106_08g0006760"/>
</dbReference>
<dbReference type="Gramene" id="OsZS97_08G006540_01">
    <property type="protein sequence ID" value="OsZS97_08G006540_01"/>
    <property type="gene ID" value="OsZS97_08G006540"/>
</dbReference>
<dbReference type="HOGENOM" id="CLU_016922_4_1_1"/>
<dbReference type="OMA" id="YQNFPKT"/>
<dbReference type="OrthoDB" id="425114at2759"/>
<dbReference type="Proteomes" id="UP000007015">
    <property type="component" value="Chromosome 8"/>
</dbReference>
<dbReference type="GO" id="GO:0005739">
    <property type="term" value="C:mitochondrion"/>
    <property type="evidence" value="ECO:0007669"/>
    <property type="project" value="UniProtKB-SubCell"/>
</dbReference>
<dbReference type="GO" id="GO:0034387">
    <property type="term" value="F:4-aminobutyrate:pyruvate transaminase activity"/>
    <property type="evidence" value="ECO:0007669"/>
    <property type="project" value="UniProtKB-EC"/>
</dbReference>
<dbReference type="GO" id="GO:0004015">
    <property type="term" value="F:adenosylmethionine-8-amino-7-oxononanoate transaminase activity"/>
    <property type="evidence" value="ECO:0007669"/>
    <property type="project" value="TreeGrafter"/>
</dbReference>
<dbReference type="GO" id="GO:0030170">
    <property type="term" value="F:pyridoxal phosphate binding"/>
    <property type="evidence" value="ECO:0007669"/>
    <property type="project" value="InterPro"/>
</dbReference>
<dbReference type="GO" id="GO:0009102">
    <property type="term" value="P:biotin biosynthetic process"/>
    <property type="evidence" value="ECO:0007669"/>
    <property type="project" value="TreeGrafter"/>
</dbReference>
<dbReference type="GO" id="GO:0009448">
    <property type="term" value="P:gamma-aminobutyric acid metabolic process"/>
    <property type="evidence" value="ECO:0007669"/>
    <property type="project" value="TreeGrafter"/>
</dbReference>
<dbReference type="CDD" id="cd00610">
    <property type="entry name" value="OAT_like"/>
    <property type="match status" value="1"/>
</dbReference>
<dbReference type="FunFam" id="3.40.640.10:FF:000014">
    <property type="entry name" value="Adenosylmethionine-8-amino-7-oxononanoate aminotransferase, probable"/>
    <property type="match status" value="1"/>
</dbReference>
<dbReference type="FunFam" id="3.90.1150.10:FF:000280">
    <property type="entry name" value="Class III aminotransferase"/>
    <property type="match status" value="1"/>
</dbReference>
<dbReference type="Gene3D" id="3.90.1150.10">
    <property type="entry name" value="Aspartate Aminotransferase, domain 1"/>
    <property type="match status" value="1"/>
</dbReference>
<dbReference type="Gene3D" id="3.40.640.10">
    <property type="entry name" value="Type I PLP-dependent aspartate aminotransferase-like (Major domain)"/>
    <property type="match status" value="1"/>
</dbReference>
<dbReference type="InterPro" id="IPR005814">
    <property type="entry name" value="Aminotrans_3"/>
</dbReference>
<dbReference type="InterPro" id="IPR049704">
    <property type="entry name" value="Aminotrans_3_PPA_site"/>
</dbReference>
<dbReference type="InterPro" id="IPR015424">
    <property type="entry name" value="PyrdxlP-dep_Trfase"/>
</dbReference>
<dbReference type="InterPro" id="IPR015421">
    <property type="entry name" value="PyrdxlP-dep_Trfase_major"/>
</dbReference>
<dbReference type="InterPro" id="IPR015422">
    <property type="entry name" value="PyrdxlP-dep_Trfase_small"/>
</dbReference>
<dbReference type="NCBIfam" id="NF004767">
    <property type="entry name" value="PRK06105.1"/>
    <property type="match status" value="1"/>
</dbReference>
<dbReference type="PANTHER" id="PTHR42684">
    <property type="entry name" value="ADENOSYLMETHIONINE-8-AMINO-7-OXONONANOATE AMINOTRANSFERASE"/>
    <property type="match status" value="1"/>
</dbReference>
<dbReference type="PANTHER" id="PTHR42684:SF3">
    <property type="entry name" value="ADENOSYLMETHIONINE-8-AMINO-7-OXONONANOATE AMINOTRANSFERASE"/>
    <property type="match status" value="1"/>
</dbReference>
<dbReference type="Pfam" id="PF00202">
    <property type="entry name" value="Aminotran_3"/>
    <property type="match status" value="1"/>
</dbReference>
<dbReference type="SUPFAM" id="SSF53383">
    <property type="entry name" value="PLP-dependent transferases"/>
    <property type="match status" value="1"/>
</dbReference>
<dbReference type="PROSITE" id="PS00600">
    <property type="entry name" value="AA_TRANSFER_CLASS_3"/>
    <property type="match status" value="1"/>
</dbReference>
<gene>
    <name type="ORF">OsI_28220</name>
</gene>
<sequence length="510" mass="55956">MICRSLLLLRSNAASKASSIVKHVAATGCLPEYSSEAPARYFSSESSLQVDSTEENGFKGHGMLAPFTAGWQSTDLHPLVIDRSEGSYVYDINGKKYIDALAGLWSTALGGNEPRLIKAATDQLNKLPFYHSFWNRTTKPSLDLANEILSMFTAREMGKIFFTNSGSEANDSQVKLVWYYNNALGRPNKKKFIARSKSYHGSTLVSASLSGLPALHQKFDLPAPFVLHTDCPHYWRFHLPDETEEEFATRLATNLENLILKEGPETIAAFIAEPVMGAGGVIPPPKTYFEKIQAVLKKYDILLIADEVITAFGRLGTMFGCDMYDIKPDLVSIAKALSSAYMPIGAILVSPEITDVIYSQSNKLGSFAHGFTYSGHPVSCAVAIEALKIYKERNIIEHVQKIAPRFQEGIKAFSGSPIVGEIRGLGLILGTEFVDNKSPNDPFPAEWGVGSLFGAECEKRGMLIRVAGDNIMLSPPLIMTPDEVEEIISKYGDALKATEERIAELKAKRG</sequence>
<keyword id="KW-0032">Aminotransferase</keyword>
<keyword id="KW-0496">Mitochondrion</keyword>
<keyword id="KW-0663">Pyridoxal phosphate</keyword>
<keyword id="KW-1185">Reference proteome</keyword>
<keyword id="KW-0808">Transferase</keyword>
<keyword id="KW-0809">Transit peptide</keyword>
<accession>B8BBZ7</accession>
<reference key="1">
    <citation type="journal article" date="2005" name="PLoS Biol.">
        <title>The genomes of Oryza sativa: a history of duplications.</title>
        <authorList>
            <person name="Yu J."/>
            <person name="Wang J."/>
            <person name="Lin W."/>
            <person name="Li S."/>
            <person name="Li H."/>
            <person name="Zhou J."/>
            <person name="Ni P."/>
            <person name="Dong W."/>
            <person name="Hu S."/>
            <person name="Zeng C."/>
            <person name="Zhang J."/>
            <person name="Zhang Y."/>
            <person name="Li R."/>
            <person name="Xu Z."/>
            <person name="Li S."/>
            <person name="Li X."/>
            <person name="Zheng H."/>
            <person name="Cong L."/>
            <person name="Lin L."/>
            <person name="Yin J."/>
            <person name="Geng J."/>
            <person name="Li G."/>
            <person name="Shi J."/>
            <person name="Liu J."/>
            <person name="Lv H."/>
            <person name="Li J."/>
            <person name="Wang J."/>
            <person name="Deng Y."/>
            <person name="Ran L."/>
            <person name="Shi X."/>
            <person name="Wang X."/>
            <person name="Wu Q."/>
            <person name="Li C."/>
            <person name="Ren X."/>
            <person name="Wang J."/>
            <person name="Wang X."/>
            <person name="Li D."/>
            <person name="Liu D."/>
            <person name="Zhang X."/>
            <person name="Ji Z."/>
            <person name="Zhao W."/>
            <person name="Sun Y."/>
            <person name="Zhang Z."/>
            <person name="Bao J."/>
            <person name="Han Y."/>
            <person name="Dong L."/>
            <person name="Ji J."/>
            <person name="Chen P."/>
            <person name="Wu S."/>
            <person name="Liu J."/>
            <person name="Xiao Y."/>
            <person name="Bu D."/>
            <person name="Tan J."/>
            <person name="Yang L."/>
            <person name="Ye C."/>
            <person name="Zhang J."/>
            <person name="Xu J."/>
            <person name="Zhou Y."/>
            <person name="Yu Y."/>
            <person name="Zhang B."/>
            <person name="Zhuang S."/>
            <person name="Wei H."/>
            <person name="Liu B."/>
            <person name="Lei M."/>
            <person name="Yu H."/>
            <person name="Li Y."/>
            <person name="Xu H."/>
            <person name="Wei S."/>
            <person name="He X."/>
            <person name="Fang L."/>
            <person name="Zhang Z."/>
            <person name="Zhang Y."/>
            <person name="Huang X."/>
            <person name="Su Z."/>
            <person name="Tong W."/>
            <person name="Li J."/>
            <person name="Tong Z."/>
            <person name="Li S."/>
            <person name="Ye J."/>
            <person name="Wang L."/>
            <person name="Fang L."/>
            <person name="Lei T."/>
            <person name="Chen C.-S."/>
            <person name="Chen H.-C."/>
            <person name="Xu Z."/>
            <person name="Li H."/>
            <person name="Huang H."/>
            <person name="Zhang F."/>
            <person name="Xu H."/>
            <person name="Li N."/>
            <person name="Zhao C."/>
            <person name="Li S."/>
            <person name="Dong L."/>
            <person name="Huang Y."/>
            <person name="Li L."/>
            <person name="Xi Y."/>
            <person name="Qi Q."/>
            <person name="Li W."/>
            <person name="Zhang B."/>
            <person name="Hu W."/>
            <person name="Zhang Y."/>
            <person name="Tian X."/>
            <person name="Jiao Y."/>
            <person name="Liang X."/>
            <person name="Jin J."/>
            <person name="Gao L."/>
            <person name="Zheng W."/>
            <person name="Hao B."/>
            <person name="Liu S.-M."/>
            <person name="Wang W."/>
            <person name="Yuan L."/>
            <person name="Cao M."/>
            <person name="McDermott J."/>
            <person name="Samudrala R."/>
            <person name="Wang J."/>
            <person name="Wong G.K.-S."/>
            <person name="Yang H."/>
        </authorList>
    </citation>
    <scope>NUCLEOTIDE SEQUENCE [LARGE SCALE GENOMIC DNA]</scope>
    <source>
        <strain>cv. 93-11</strain>
    </source>
</reference>